<reference key="1">
    <citation type="submission" date="2003-03" db="EMBL/GenBank/DDBJ databases">
        <title>African swine fever virus genomes.</title>
        <authorList>
            <person name="Kutish G.F."/>
            <person name="Rock D.L."/>
        </authorList>
    </citation>
    <scope>NUCLEOTIDE SEQUENCE [LARGE SCALE GENOMIC DNA]</scope>
</reference>
<proteinExistence type="inferred from homology"/>
<accession>P0C9X1</accession>
<dbReference type="EC" id="3.6.4.-"/>
<dbReference type="EMBL" id="AY261366">
    <property type="status" value="NOT_ANNOTATED_CDS"/>
    <property type="molecule type" value="Genomic_DNA"/>
</dbReference>
<dbReference type="SMR" id="P0C9X1"/>
<dbReference type="Proteomes" id="UP000000858">
    <property type="component" value="Segment"/>
</dbReference>
<dbReference type="GO" id="GO:0005524">
    <property type="term" value="F:ATP binding"/>
    <property type="evidence" value="ECO:0007669"/>
    <property type="project" value="UniProtKB-KW"/>
</dbReference>
<dbReference type="GO" id="GO:0004386">
    <property type="term" value="F:helicase activity"/>
    <property type="evidence" value="ECO:0007669"/>
    <property type="project" value="UniProtKB-KW"/>
</dbReference>
<dbReference type="GO" id="GO:0016817">
    <property type="term" value="F:hydrolase activity, acting on acid anhydrides"/>
    <property type="evidence" value="ECO:0007669"/>
    <property type="project" value="InterPro"/>
</dbReference>
<dbReference type="GO" id="GO:0006260">
    <property type="term" value="P:DNA replication"/>
    <property type="evidence" value="ECO:0007669"/>
    <property type="project" value="UniProtKB-KW"/>
</dbReference>
<dbReference type="Gene3D" id="3.40.50.300">
    <property type="entry name" value="P-loop containing nucleotide triphosphate hydrolases"/>
    <property type="match status" value="1"/>
</dbReference>
<dbReference type="InterPro" id="IPR056443">
    <property type="entry name" value="AEP_C962R"/>
</dbReference>
<dbReference type="InterPro" id="IPR014015">
    <property type="entry name" value="Helicase_SF3_DNA-vir"/>
</dbReference>
<dbReference type="InterPro" id="IPR027417">
    <property type="entry name" value="P-loop_NTPase"/>
</dbReference>
<dbReference type="InterPro" id="IPR014818">
    <property type="entry name" value="Phage/plasmid_primase_P4_C"/>
</dbReference>
<dbReference type="InterPro" id="IPR014819">
    <property type="entry name" value="PriCT_2"/>
</dbReference>
<dbReference type="InterPro" id="IPR051620">
    <property type="entry name" value="Viral_Helicase-Primase_Cplx"/>
</dbReference>
<dbReference type="PANTHER" id="PTHR35372">
    <property type="entry name" value="ATP BINDING PROTEIN-RELATED"/>
    <property type="match status" value="1"/>
</dbReference>
<dbReference type="PANTHER" id="PTHR35372:SF2">
    <property type="entry name" value="SF3 HELICASE DOMAIN-CONTAINING PROTEIN"/>
    <property type="match status" value="1"/>
</dbReference>
<dbReference type="Pfam" id="PF23162">
    <property type="entry name" value="AEP_C962R"/>
    <property type="match status" value="1"/>
</dbReference>
<dbReference type="Pfam" id="PF08706">
    <property type="entry name" value="D5_N"/>
    <property type="match status" value="1"/>
</dbReference>
<dbReference type="Pfam" id="PF08707">
    <property type="entry name" value="PriCT_2"/>
    <property type="match status" value="1"/>
</dbReference>
<dbReference type="SUPFAM" id="SSF52540">
    <property type="entry name" value="P-loop containing nucleoside triphosphate hydrolases"/>
    <property type="match status" value="1"/>
</dbReference>
<dbReference type="PROSITE" id="PS51206">
    <property type="entry name" value="SF3_HELICASE_1"/>
    <property type="match status" value="1"/>
</dbReference>
<evidence type="ECO:0000255" key="1">
    <source>
        <dbReference type="PROSITE-ProRule" id="PRU00551"/>
    </source>
</evidence>
<evidence type="ECO:0000305" key="2"/>
<sequence>MREESWEDHDTIQLTAQRKYLAEVQALETLLTRELSVFLTEPGSKKTNIINRITGKTYALPSTELLRLYEHLEQCRKQGALMYFLERQGTYSGLMLDYDLKLNTNAAPPLEPPALSRLCHRIFVHIKNSSVLPEGSHKIHFFFTLKPEVVQGKYGFHVLIPGLKLAASTKKSIIGSLQHDATVQKILHEQGVANPESCLDPHSASVPSLLYGSSKLNHKPYQLKTGFELVFDSSDPDYIPIHQIKNIESYNLVSELSLTNEQGSLVRPVYCAADIAAEKEEEIPTEDHSLSILMLHDPEARYLHKILNLLPPEYYVEYPLWSNVVFALANTSANYRPLAEWFSQKCPEKWNTGGKEKLEQLWNDASRHTEKKITKRSIMYWAHKHAPQQYKEIVEQGYFSILAEYVYSYNGMLEHYMIAKVIYAMMGNKFVVDVDSNGKYVWFEFVLPGQPMNQGEIWKWRKEVNPDELHIYISENFSRVMDRITEHIKYHLSQPHETNILNYYKKLLKAFERSKSKIFNDSFKKGVIRQAEFLFRQRSFIQTLDTNPHLLGVGNGVLSIETIPAKLINHFHEHPIHQYTHICYVPFNPENPWTKLLLNALQDIIPELDARLWIMFYLSTAIFRGLKEALMLLWLGGGCNGKTFLMRLVAMVLGDHYASKLNISLLTSYRETAEKPNSAFMRLKGRGYGYFEETNKSEVLNTSRLKEMVNPGDVTARELNQKQESFQMTATMVAASNYNFIIDTTDHGTWRRLRHYRSKVKFCHNPDPNNSYEKKEDPRFIHEYIMDPNCQNAFFSILVYFWEKLQKEYNGQIKKVFCPTIESETEAYRKSQDTLHRFITERIVESPSAETVYNLSEVVTAYAEWYNANINVKRHIALELSQELENSVLEKYLQWSPNKTRILKGCRILHKFETLQPGESYIGVSTAGTLLNTPICEPKNKWWEWSPNPSAPPEKEASAPTP</sequence>
<name>H962R_ASFWA</name>
<keyword id="KW-0067">ATP-binding</keyword>
<keyword id="KW-0235">DNA replication</keyword>
<keyword id="KW-0347">Helicase</keyword>
<keyword id="KW-0378">Hydrolase</keyword>
<keyword id="KW-0426">Late protein</keyword>
<keyword id="KW-0547">Nucleotide-binding</keyword>
<organism>
    <name type="scientific">African swine fever virus (isolate Warthog/Namibia/Wart80/1980)</name>
    <name type="common">ASFV</name>
    <dbReference type="NCBI Taxonomy" id="561444"/>
    <lineage>
        <taxon>Viruses</taxon>
        <taxon>Varidnaviria</taxon>
        <taxon>Bamfordvirae</taxon>
        <taxon>Nucleocytoviricota</taxon>
        <taxon>Pokkesviricetes</taxon>
        <taxon>Asfuvirales</taxon>
        <taxon>Asfarviridae</taxon>
        <taxon>Asfivirus</taxon>
        <taxon>African swine fever virus</taxon>
    </lineage>
</organism>
<organismHost>
    <name type="scientific">Ornithodoros</name>
    <name type="common">relapsing fever ticks</name>
    <dbReference type="NCBI Taxonomy" id="6937"/>
</organismHost>
<organismHost>
    <name type="scientific">Phacochoerus aethiopicus</name>
    <name type="common">Warthog</name>
    <dbReference type="NCBI Taxonomy" id="85517"/>
</organismHost>
<organismHost>
    <name type="scientific">Phacochoerus africanus</name>
    <name type="common">Warthog</name>
    <dbReference type="NCBI Taxonomy" id="41426"/>
</organismHost>
<organismHost>
    <name type="scientific">Potamochoerus larvatus</name>
    <name type="common">Bushpig</name>
    <dbReference type="NCBI Taxonomy" id="273792"/>
</organismHost>
<organismHost>
    <name type="scientific">Sus scrofa</name>
    <name type="common">Pig</name>
    <dbReference type="NCBI Taxonomy" id="9823"/>
</organismHost>
<feature type="chain" id="PRO_0000373376" description="Putative primase C962R">
    <location>
        <begin position="1"/>
        <end position="962"/>
    </location>
</feature>
<feature type="domain" description="SF3 helicase" evidence="1">
    <location>
        <begin position="607"/>
        <end position="775"/>
    </location>
</feature>
<feature type="binding site" evidence="1">
    <location>
        <begin position="636"/>
        <end position="643"/>
    </location>
    <ligand>
        <name>ATP</name>
        <dbReference type="ChEBI" id="CHEBI:30616"/>
    </ligand>
</feature>
<comment type="induction">
    <text evidence="2">Expressed in the late phase of the viral replicative cycle.</text>
</comment>
<comment type="similarity">
    <text evidence="2">Belongs to the asfivirus helicase C962R family.</text>
</comment>
<gene>
    <name type="ordered locus">War-081</name>
</gene>
<protein>
    <recommendedName>
        <fullName evidence="2">Putative primase C962R</fullName>
        <ecNumber>3.6.4.-</ecNumber>
    </recommendedName>
</protein>